<name>Y4SL_SINFN</name>
<feature type="chain" id="PRO_0000166160" description="Uncharacterized oxidoreductase y4sL">
    <location>
        <begin position="1"/>
        <end position="203"/>
    </location>
</feature>
<reference key="1">
    <citation type="journal article" date="1997" name="Nature">
        <title>Molecular basis of symbiosis between Rhizobium and legumes.</title>
        <authorList>
            <person name="Freiberg C.A."/>
            <person name="Fellay R."/>
            <person name="Bairoch A."/>
            <person name="Broughton W.J."/>
            <person name="Rosenthal A."/>
            <person name="Perret X."/>
        </authorList>
    </citation>
    <scope>NUCLEOTIDE SEQUENCE [LARGE SCALE GENOMIC DNA]</scope>
    <source>
        <strain>NBRC 101917 / NGR234</strain>
    </source>
</reference>
<reference key="2">
    <citation type="journal article" date="2009" name="Appl. Environ. Microbiol.">
        <title>Rhizobium sp. strain NGR234 possesses a remarkable number of secretion systems.</title>
        <authorList>
            <person name="Schmeisser C."/>
            <person name="Liesegang H."/>
            <person name="Krysciak D."/>
            <person name="Bakkou N."/>
            <person name="Le Quere A."/>
            <person name="Wollherr A."/>
            <person name="Heinemeyer I."/>
            <person name="Morgenstern B."/>
            <person name="Pommerening-Roeser A."/>
            <person name="Flores M."/>
            <person name="Palacios R."/>
            <person name="Brenner S."/>
            <person name="Gottschalk G."/>
            <person name="Schmitz R.A."/>
            <person name="Broughton W.J."/>
            <person name="Perret X."/>
            <person name="Strittmatter A.W."/>
            <person name="Streit W.R."/>
        </authorList>
    </citation>
    <scope>NUCLEOTIDE SEQUENCE [LARGE SCALE GENOMIC DNA]</scope>
    <source>
        <strain>NBRC 101917 / NGR234</strain>
    </source>
</reference>
<organism>
    <name type="scientific">Sinorhizobium fredii (strain NBRC 101917 / NGR234)</name>
    <dbReference type="NCBI Taxonomy" id="394"/>
    <lineage>
        <taxon>Bacteria</taxon>
        <taxon>Pseudomonadati</taxon>
        <taxon>Pseudomonadota</taxon>
        <taxon>Alphaproteobacteria</taxon>
        <taxon>Hyphomicrobiales</taxon>
        <taxon>Rhizobiaceae</taxon>
        <taxon>Sinorhizobium/Ensifer group</taxon>
        <taxon>Sinorhizobium</taxon>
    </lineage>
</organism>
<proteinExistence type="inferred from homology"/>
<keyword id="KW-0560">Oxidoreductase</keyword>
<keyword id="KW-0614">Plasmid</keyword>
<keyword id="KW-1185">Reference proteome</keyword>
<accession>P55655</accession>
<sequence>MGVRFSWGTEVRKLDVEGDKVRGVVTNWERLAADAVVVALGSYSPLLLKRHGIKLPVYPVKGYSLTIPITDASRAPESTIMDETYKIAITRLGDRIRVGGMAEISGYTNDLGPARRRTLEHSVMDLFPGGDAKEASYWSGLRPMTPDGTPVIGPTKIAGLFLNTGHGTLGWTMSSGSARVIADLVSGRKPEIDATDLAVSRYA</sequence>
<protein>
    <recommendedName>
        <fullName>Uncharacterized oxidoreductase y4sL</fullName>
        <ecNumber>1.-.-.-</ecNumber>
    </recommendedName>
</protein>
<gene>
    <name type="ordered locus">NGR_a01610</name>
    <name type="ORF">y4sL</name>
</gene>
<dbReference type="EC" id="1.-.-.-"/>
<dbReference type="EMBL" id="U00090">
    <property type="protein sequence ID" value="AAB91851.1"/>
    <property type="molecule type" value="Genomic_DNA"/>
</dbReference>
<dbReference type="RefSeq" id="NP_444064.1">
    <property type="nucleotide sequence ID" value="NC_000914.2"/>
</dbReference>
<dbReference type="SMR" id="P55655"/>
<dbReference type="KEGG" id="rhi:NGR_a01610"/>
<dbReference type="PATRIC" id="fig|394.7.peg.150"/>
<dbReference type="eggNOG" id="COG0665">
    <property type="taxonomic scope" value="Bacteria"/>
</dbReference>
<dbReference type="HOGENOM" id="CLU_007884_9_3_5"/>
<dbReference type="OrthoDB" id="9805337at2"/>
<dbReference type="Proteomes" id="UP000001054">
    <property type="component" value="Plasmid pNGR234a"/>
</dbReference>
<dbReference type="GO" id="GO:0005737">
    <property type="term" value="C:cytoplasm"/>
    <property type="evidence" value="ECO:0007669"/>
    <property type="project" value="TreeGrafter"/>
</dbReference>
<dbReference type="GO" id="GO:0005886">
    <property type="term" value="C:plasma membrane"/>
    <property type="evidence" value="ECO:0007669"/>
    <property type="project" value="TreeGrafter"/>
</dbReference>
<dbReference type="GO" id="GO:0008718">
    <property type="term" value="F:D-amino-acid dehydrogenase activity"/>
    <property type="evidence" value="ECO:0007669"/>
    <property type="project" value="TreeGrafter"/>
</dbReference>
<dbReference type="GO" id="GO:0055130">
    <property type="term" value="P:D-alanine catabolic process"/>
    <property type="evidence" value="ECO:0007669"/>
    <property type="project" value="TreeGrafter"/>
</dbReference>
<dbReference type="Gene3D" id="3.30.9.10">
    <property type="entry name" value="D-Amino Acid Oxidase, subunit A, domain 2"/>
    <property type="match status" value="1"/>
</dbReference>
<dbReference type="Gene3D" id="3.50.50.60">
    <property type="entry name" value="FAD/NAD(P)-binding domain"/>
    <property type="match status" value="1"/>
</dbReference>
<dbReference type="InterPro" id="IPR006076">
    <property type="entry name" value="FAD-dep_OxRdtase"/>
</dbReference>
<dbReference type="InterPro" id="IPR036188">
    <property type="entry name" value="FAD/NAD-bd_sf"/>
</dbReference>
<dbReference type="PANTHER" id="PTHR13847:SF280">
    <property type="entry name" value="D-AMINO ACID DEHYDROGENASE"/>
    <property type="match status" value="1"/>
</dbReference>
<dbReference type="PANTHER" id="PTHR13847">
    <property type="entry name" value="SARCOSINE DEHYDROGENASE-RELATED"/>
    <property type="match status" value="1"/>
</dbReference>
<dbReference type="Pfam" id="PF01266">
    <property type="entry name" value="DAO"/>
    <property type="match status" value="1"/>
</dbReference>
<dbReference type="SUPFAM" id="SSF54373">
    <property type="entry name" value="FAD-linked reductases, C-terminal domain"/>
    <property type="match status" value="1"/>
</dbReference>
<dbReference type="SUPFAM" id="SSF51905">
    <property type="entry name" value="FAD/NAD(P)-binding domain"/>
    <property type="match status" value="1"/>
</dbReference>
<geneLocation type="plasmid">
    <name>sym pNGR234a</name>
</geneLocation>
<evidence type="ECO:0000305" key="1"/>
<comment type="function">
    <text>Either a functional dehydrogenase or a non-functional fragment.</text>
</comment>
<comment type="similarity">
    <text evidence="1">Belongs to the DadA oxidoreductase family.</text>
</comment>